<reference key="1">
    <citation type="journal article" date="2005" name="Proc. Natl. Acad. Sci. U.S.A.">
        <title>Comparison of the complete genome sequences of Pseudomonas syringae pv. syringae B728a and pv. tomato DC3000.</title>
        <authorList>
            <person name="Feil H."/>
            <person name="Feil W.S."/>
            <person name="Chain P."/>
            <person name="Larimer F."/>
            <person name="Dibartolo G."/>
            <person name="Copeland A."/>
            <person name="Lykidis A."/>
            <person name="Trong S."/>
            <person name="Nolan M."/>
            <person name="Goltsman E."/>
            <person name="Thiel J."/>
            <person name="Malfatti S."/>
            <person name="Loper J.E."/>
            <person name="Lapidus A."/>
            <person name="Detter J.C."/>
            <person name="Land M."/>
            <person name="Richardson P.M."/>
            <person name="Kyrpides N.C."/>
            <person name="Ivanova N."/>
            <person name="Lindow S.E."/>
        </authorList>
    </citation>
    <scope>NUCLEOTIDE SEQUENCE [LARGE SCALE GENOMIC DNA]</scope>
    <source>
        <strain>B728a</strain>
    </source>
</reference>
<sequence length="91" mass="10334">MPRSLKKGPFIDLHLLKKIEVAAEKNDRKPVKTWSRRSMILPQMVGLTIAVHNGRQHVPVLVNEDMVGHKLGEFAGTRTYRGHVADKKAKR</sequence>
<protein>
    <recommendedName>
        <fullName evidence="1">Small ribosomal subunit protein uS19</fullName>
    </recommendedName>
    <alternativeName>
        <fullName evidence="2">30S ribosomal protein S19</fullName>
    </alternativeName>
</protein>
<comment type="function">
    <text evidence="1">Protein S19 forms a complex with S13 that binds strongly to the 16S ribosomal RNA.</text>
</comment>
<comment type="similarity">
    <text evidence="1">Belongs to the universal ribosomal protein uS19 family.</text>
</comment>
<evidence type="ECO:0000255" key="1">
    <source>
        <dbReference type="HAMAP-Rule" id="MF_00531"/>
    </source>
</evidence>
<evidence type="ECO:0000305" key="2"/>
<accession>Q4ZMP8</accession>
<name>RS19_PSEU2</name>
<gene>
    <name evidence="1" type="primary">rpsS</name>
    <name type="ordered locus">Psyr_4544</name>
</gene>
<organism>
    <name type="scientific">Pseudomonas syringae pv. syringae (strain B728a)</name>
    <dbReference type="NCBI Taxonomy" id="205918"/>
    <lineage>
        <taxon>Bacteria</taxon>
        <taxon>Pseudomonadati</taxon>
        <taxon>Pseudomonadota</taxon>
        <taxon>Gammaproteobacteria</taxon>
        <taxon>Pseudomonadales</taxon>
        <taxon>Pseudomonadaceae</taxon>
        <taxon>Pseudomonas</taxon>
        <taxon>Pseudomonas syringae</taxon>
    </lineage>
</organism>
<keyword id="KW-0687">Ribonucleoprotein</keyword>
<keyword id="KW-0689">Ribosomal protein</keyword>
<keyword id="KW-0694">RNA-binding</keyword>
<keyword id="KW-0699">rRNA-binding</keyword>
<feature type="chain" id="PRO_0000265405" description="Small ribosomal subunit protein uS19">
    <location>
        <begin position="1"/>
        <end position="91"/>
    </location>
</feature>
<proteinExistence type="inferred from homology"/>
<dbReference type="EMBL" id="CP000075">
    <property type="protein sequence ID" value="AAY39574.1"/>
    <property type="molecule type" value="Genomic_DNA"/>
</dbReference>
<dbReference type="RefSeq" id="WP_002555486.1">
    <property type="nucleotide sequence ID" value="NC_007005.1"/>
</dbReference>
<dbReference type="RefSeq" id="YP_237612.1">
    <property type="nucleotide sequence ID" value="NC_007005.1"/>
</dbReference>
<dbReference type="SMR" id="Q4ZMP8"/>
<dbReference type="STRING" id="205918.Psyr_4544"/>
<dbReference type="GeneID" id="98285434"/>
<dbReference type="KEGG" id="psb:Psyr_4544"/>
<dbReference type="PATRIC" id="fig|205918.7.peg.4683"/>
<dbReference type="eggNOG" id="COG0185">
    <property type="taxonomic scope" value="Bacteria"/>
</dbReference>
<dbReference type="HOGENOM" id="CLU_144911_0_1_6"/>
<dbReference type="OrthoDB" id="9797833at2"/>
<dbReference type="PRO" id="PR:Q4ZMP8"/>
<dbReference type="Proteomes" id="UP000000426">
    <property type="component" value="Chromosome"/>
</dbReference>
<dbReference type="GO" id="GO:0005737">
    <property type="term" value="C:cytoplasm"/>
    <property type="evidence" value="ECO:0007669"/>
    <property type="project" value="UniProtKB-ARBA"/>
</dbReference>
<dbReference type="GO" id="GO:0015935">
    <property type="term" value="C:small ribosomal subunit"/>
    <property type="evidence" value="ECO:0007669"/>
    <property type="project" value="InterPro"/>
</dbReference>
<dbReference type="GO" id="GO:0019843">
    <property type="term" value="F:rRNA binding"/>
    <property type="evidence" value="ECO:0007669"/>
    <property type="project" value="UniProtKB-UniRule"/>
</dbReference>
<dbReference type="GO" id="GO:0003735">
    <property type="term" value="F:structural constituent of ribosome"/>
    <property type="evidence" value="ECO:0007669"/>
    <property type="project" value="InterPro"/>
</dbReference>
<dbReference type="GO" id="GO:0000028">
    <property type="term" value="P:ribosomal small subunit assembly"/>
    <property type="evidence" value="ECO:0007669"/>
    <property type="project" value="TreeGrafter"/>
</dbReference>
<dbReference type="GO" id="GO:0006412">
    <property type="term" value="P:translation"/>
    <property type="evidence" value="ECO:0007669"/>
    <property type="project" value="UniProtKB-UniRule"/>
</dbReference>
<dbReference type="FunFam" id="3.30.860.10:FF:000001">
    <property type="entry name" value="30S ribosomal protein S19"/>
    <property type="match status" value="1"/>
</dbReference>
<dbReference type="Gene3D" id="3.30.860.10">
    <property type="entry name" value="30s Ribosomal Protein S19, Chain A"/>
    <property type="match status" value="1"/>
</dbReference>
<dbReference type="HAMAP" id="MF_00531">
    <property type="entry name" value="Ribosomal_uS19"/>
    <property type="match status" value="1"/>
</dbReference>
<dbReference type="InterPro" id="IPR002222">
    <property type="entry name" value="Ribosomal_uS19"/>
</dbReference>
<dbReference type="InterPro" id="IPR005732">
    <property type="entry name" value="Ribosomal_uS19_bac-type"/>
</dbReference>
<dbReference type="InterPro" id="IPR020934">
    <property type="entry name" value="Ribosomal_uS19_CS"/>
</dbReference>
<dbReference type="InterPro" id="IPR023575">
    <property type="entry name" value="Ribosomal_uS19_SF"/>
</dbReference>
<dbReference type="NCBIfam" id="TIGR01050">
    <property type="entry name" value="rpsS_bact"/>
    <property type="match status" value="1"/>
</dbReference>
<dbReference type="PANTHER" id="PTHR11880">
    <property type="entry name" value="RIBOSOMAL PROTEIN S19P FAMILY MEMBER"/>
    <property type="match status" value="1"/>
</dbReference>
<dbReference type="PANTHER" id="PTHR11880:SF8">
    <property type="entry name" value="SMALL RIBOSOMAL SUBUNIT PROTEIN US19M"/>
    <property type="match status" value="1"/>
</dbReference>
<dbReference type="Pfam" id="PF00203">
    <property type="entry name" value="Ribosomal_S19"/>
    <property type="match status" value="1"/>
</dbReference>
<dbReference type="PIRSF" id="PIRSF002144">
    <property type="entry name" value="Ribosomal_S19"/>
    <property type="match status" value="1"/>
</dbReference>
<dbReference type="PRINTS" id="PR00975">
    <property type="entry name" value="RIBOSOMALS19"/>
</dbReference>
<dbReference type="SUPFAM" id="SSF54570">
    <property type="entry name" value="Ribosomal protein S19"/>
    <property type="match status" value="1"/>
</dbReference>
<dbReference type="PROSITE" id="PS00323">
    <property type="entry name" value="RIBOSOMAL_S19"/>
    <property type="match status" value="1"/>
</dbReference>